<comment type="catalytic activity">
    <reaction evidence="1">
        <text>2-formamido-N(1)-(5-O-phospho-beta-D-ribosyl)acetamidine + ATP = 5-amino-1-(5-phospho-beta-D-ribosyl)imidazole + ADP + phosphate + H(+)</text>
        <dbReference type="Rhea" id="RHEA:23032"/>
        <dbReference type="ChEBI" id="CHEBI:15378"/>
        <dbReference type="ChEBI" id="CHEBI:30616"/>
        <dbReference type="ChEBI" id="CHEBI:43474"/>
        <dbReference type="ChEBI" id="CHEBI:137981"/>
        <dbReference type="ChEBI" id="CHEBI:147287"/>
        <dbReference type="ChEBI" id="CHEBI:456216"/>
        <dbReference type="EC" id="6.3.3.1"/>
    </reaction>
</comment>
<comment type="pathway">
    <text evidence="1">Purine metabolism; IMP biosynthesis via de novo pathway; 5-amino-1-(5-phospho-D-ribosyl)imidazole from N(2)-formyl-N(1)-(5-phospho-D-ribosyl)glycinamide: step 2/2.</text>
</comment>
<comment type="subcellular location">
    <subcellularLocation>
        <location evidence="1">Cytoplasm</location>
    </subcellularLocation>
</comment>
<comment type="similarity">
    <text evidence="1">Belongs to the AIR synthase family.</text>
</comment>
<sequence>MDYKTSGVDIEAGREFVSEIKQAVEGTHTSNVIEGIGGFGGLFRIPIDSFKKPVLVSGTDGVGTKLELAQSKNFHFEVGIDLVAMCMNDIITSGAKPLFFLDYIATGKLDKNQLLRVVKGISHGCGENNCSLLGGETAEMPGFYSKNKYDLAGFCVGIVDEDKLINGKKVSENDLIIALKSNGVHSNGFSLVRKIIQNNNQIDKEFEKVFHLNFYDELLKPTKIYNNVINQMLTENIEIKAMSHITGGGIPENLPRCMPSDFIPYVDTGSWEIPIIFKFLKEKGSIPEKDFWNTFNLGVGFCLIIDKQFKDPILNICKDNEIDSWEIGKIVRKNDSTISKFLPEILT</sequence>
<keyword id="KW-0067">ATP-binding</keyword>
<keyword id="KW-0963">Cytoplasm</keyword>
<keyword id="KW-0436">Ligase</keyword>
<keyword id="KW-0547">Nucleotide-binding</keyword>
<keyword id="KW-0658">Purine biosynthesis</keyword>
<name>PUR5_PROMS</name>
<evidence type="ECO:0000255" key="1">
    <source>
        <dbReference type="HAMAP-Rule" id="MF_00741"/>
    </source>
</evidence>
<dbReference type="EC" id="6.3.3.1" evidence="1"/>
<dbReference type="EMBL" id="CP000551">
    <property type="protein sequence ID" value="ABM71081.1"/>
    <property type="molecule type" value="Genomic_DNA"/>
</dbReference>
<dbReference type="RefSeq" id="WP_011819203.1">
    <property type="nucleotide sequence ID" value="NC_008816.1"/>
</dbReference>
<dbReference type="SMR" id="A2BTH0"/>
<dbReference type="STRING" id="146891.A9601_17981"/>
<dbReference type="KEGG" id="pmb:A9601_17981"/>
<dbReference type="eggNOG" id="COG0150">
    <property type="taxonomic scope" value="Bacteria"/>
</dbReference>
<dbReference type="HOGENOM" id="CLU_047116_0_0_3"/>
<dbReference type="OrthoDB" id="9802507at2"/>
<dbReference type="UniPathway" id="UPA00074">
    <property type="reaction ID" value="UER00129"/>
</dbReference>
<dbReference type="Proteomes" id="UP000002590">
    <property type="component" value="Chromosome"/>
</dbReference>
<dbReference type="GO" id="GO:0005829">
    <property type="term" value="C:cytosol"/>
    <property type="evidence" value="ECO:0007669"/>
    <property type="project" value="TreeGrafter"/>
</dbReference>
<dbReference type="GO" id="GO:0005524">
    <property type="term" value="F:ATP binding"/>
    <property type="evidence" value="ECO:0007669"/>
    <property type="project" value="UniProtKB-KW"/>
</dbReference>
<dbReference type="GO" id="GO:0004637">
    <property type="term" value="F:phosphoribosylamine-glycine ligase activity"/>
    <property type="evidence" value="ECO:0007669"/>
    <property type="project" value="TreeGrafter"/>
</dbReference>
<dbReference type="GO" id="GO:0004641">
    <property type="term" value="F:phosphoribosylformylglycinamidine cyclo-ligase activity"/>
    <property type="evidence" value="ECO:0007669"/>
    <property type="project" value="UniProtKB-UniRule"/>
</dbReference>
<dbReference type="GO" id="GO:0006189">
    <property type="term" value="P:'de novo' IMP biosynthetic process"/>
    <property type="evidence" value="ECO:0007669"/>
    <property type="project" value="UniProtKB-UniRule"/>
</dbReference>
<dbReference type="GO" id="GO:0046084">
    <property type="term" value="P:adenine biosynthetic process"/>
    <property type="evidence" value="ECO:0007669"/>
    <property type="project" value="TreeGrafter"/>
</dbReference>
<dbReference type="CDD" id="cd02196">
    <property type="entry name" value="PurM"/>
    <property type="match status" value="1"/>
</dbReference>
<dbReference type="FunFam" id="3.30.1330.10:FF:000001">
    <property type="entry name" value="Phosphoribosylformylglycinamidine cyclo-ligase"/>
    <property type="match status" value="1"/>
</dbReference>
<dbReference type="FunFam" id="3.90.650.10:FF:000011">
    <property type="entry name" value="Phosphoribosylformylglycinamidine cyclo-ligase"/>
    <property type="match status" value="1"/>
</dbReference>
<dbReference type="Gene3D" id="3.90.650.10">
    <property type="entry name" value="PurM-like C-terminal domain"/>
    <property type="match status" value="1"/>
</dbReference>
<dbReference type="Gene3D" id="3.30.1330.10">
    <property type="entry name" value="PurM-like, N-terminal domain"/>
    <property type="match status" value="1"/>
</dbReference>
<dbReference type="HAMAP" id="MF_00741">
    <property type="entry name" value="AIRS"/>
    <property type="match status" value="1"/>
</dbReference>
<dbReference type="InterPro" id="IPR010918">
    <property type="entry name" value="PurM-like_C_dom"/>
</dbReference>
<dbReference type="InterPro" id="IPR036676">
    <property type="entry name" value="PurM-like_C_sf"/>
</dbReference>
<dbReference type="InterPro" id="IPR016188">
    <property type="entry name" value="PurM-like_N"/>
</dbReference>
<dbReference type="InterPro" id="IPR036921">
    <property type="entry name" value="PurM-like_N_sf"/>
</dbReference>
<dbReference type="InterPro" id="IPR004733">
    <property type="entry name" value="PurM_cligase"/>
</dbReference>
<dbReference type="NCBIfam" id="TIGR00878">
    <property type="entry name" value="purM"/>
    <property type="match status" value="1"/>
</dbReference>
<dbReference type="PANTHER" id="PTHR10520:SF12">
    <property type="entry name" value="TRIFUNCTIONAL PURINE BIOSYNTHETIC PROTEIN ADENOSINE-3"/>
    <property type="match status" value="1"/>
</dbReference>
<dbReference type="PANTHER" id="PTHR10520">
    <property type="entry name" value="TRIFUNCTIONAL PURINE BIOSYNTHETIC PROTEIN ADENOSINE-3-RELATED"/>
    <property type="match status" value="1"/>
</dbReference>
<dbReference type="Pfam" id="PF00586">
    <property type="entry name" value="AIRS"/>
    <property type="match status" value="1"/>
</dbReference>
<dbReference type="Pfam" id="PF02769">
    <property type="entry name" value="AIRS_C"/>
    <property type="match status" value="1"/>
</dbReference>
<dbReference type="SUPFAM" id="SSF56042">
    <property type="entry name" value="PurM C-terminal domain-like"/>
    <property type="match status" value="1"/>
</dbReference>
<dbReference type="SUPFAM" id="SSF55326">
    <property type="entry name" value="PurM N-terminal domain-like"/>
    <property type="match status" value="1"/>
</dbReference>
<reference key="1">
    <citation type="journal article" date="2007" name="PLoS Genet.">
        <title>Patterns and implications of gene gain and loss in the evolution of Prochlorococcus.</title>
        <authorList>
            <person name="Kettler G.C."/>
            <person name="Martiny A.C."/>
            <person name="Huang K."/>
            <person name="Zucker J."/>
            <person name="Coleman M.L."/>
            <person name="Rodrigue S."/>
            <person name="Chen F."/>
            <person name="Lapidus A."/>
            <person name="Ferriera S."/>
            <person name="Johnson J."/>
            <person name="Steglich C."/>
            <person name="Church G.M."/>
            <person name="Richardson P."/>
            <person name="Chisholm S.W."/>
        </authorList>
    </citation>
    <scope>NUCLEOTIDE SEQUENCE [LARGE SCALE GENOMIC DNA]</scope>
    <source>
        <strain>AS9601</strain>
    </source>
</reference>
<accession>A2BTH0</accession>
<gene>
    <name evidence="1" type="primary">purM</name>
    <name type="ordered locus">A9601_17981</name>
</gene>
<organism>
    <name type="scientific">Prochlorococcus marinus (strain AS9601)</name>
    <dbReference type="NCBI Taxonomy" id="146891"/>
    <lineage>
        <taxon>Bacteria</taxon>
        <taxon>Bacillati</taxon>
        <taxon>Cyanobacteriota</taxon>
        <taxon>Cyanophyceae</taxon>
        <taxon>Synechococcales</taxon>
        <taxon>Prochlorococcaceae</taxon>
        <taxon>Prochlorococcus</taxon>
    </lineage>
</organism>
<feature type="chain" id="PRO_1000046456" description="Phosphoribosylformylglycinamidine cyclo-ligase">
    <location>
        <begin position="1"/>
        <end position="347"/>
    </location>
</feature>
<protein>
    <recommendedName>
        <fullName evidence="1">Phosphoribosylformylglycinamidine cyclo-ligase</fullName>
        <ecNumber evidence="1">6.3.3.1</ecNumber>
    </recommendedName>
    <alternativeName>
        <fullName evidence="1">AIR synthase</fullName>
    </alternativeName>
    <alternativeName>
        <fullName evidence="1">AIRS</fullName>
    </alternativeName>
    <alternativeName>
        <fullName evidence="1">Phosphoribosyl-aminoimidazole synthetase</fullName>
    </alternativeName>
</protein>
<proteinExistence type="inferred from homology"/>